<dbReference type="EMBL" id="CP001098">
    <property type="protein sequence ID" value="ACL69413.1"/>
    <property type="molecule type" value="Genomic_DNA"/>
</dbReference>
<dbReference type="RefSeq" id="WP_012635601.1">
    <property type="nucleotide sequence ID" value="NC_011899.1"/>
</dbReference>
<dbReference type="SMR" id="B8D2I6"/>
<dbReference type="STRING" id="373903.Hore_06560"/>
<dbReference type="KEGG" id="hor:Hore_06560"/>
<dbReference type="eggNOG" id="COG1438">
    <property type="taxonomic scope" value="Bacteria"/>
</dbReference>
<dbReference type="HOGENOM" id="CLU_097103_3_0_9"/>
<dbReference type="OrthoDB" id="9807089at2"/>
<dbReference type="UniPathway" id="UPA00068"/>
<dbReference type="Proteomes" id="UP000000719">
    <property type="component" value="Chromosome"/>
</dbReference>
<dbReference type="GO" id="GO:0005737">
    <property type="term" value="C:cytoplasm"/>
    <property type="evidence" value="ECO:0007669"/>
    <property type="project" value="UniProtKB-SubCell"/>
</dbReference>
<dbReference type="GO" id="GO:0034618">
    <property type="term" value="F:arginine binding"/>
    <property type="evidence" value="ECO:0007669"/>
    <property type="project" value="InterPro"/>
</dbReference>
<dbReference type="GO" id="GO:0003677">
    <property type="term" value="F:DNA binding"/>
    <property type="evidence" value="ECO:0007669"/>
    <property type="project" value="UniProtKB-KW"/>
</dbReference>
<dbReference type="GO" id="GO:0003700">
    <property type="term" value="F:DNA-binding transcription factor activity"/>
    <property type="evidence" value="ECO:0007669"/>
    <property type="project" value="UniProtKB-UniRule"/>
</dbReference>
<dbReference type="GO" id="GO:0006526">
    <property type="term" value="P:L-arginine biosynthetic process"/>
    <property type="evidence" value="ECO:0007669"/>
    <property type="project" value="UniProtKB-UniPathway"/>
</dbReference>
<dbReference type="GO" id="GO:0051259">
    <property type="term" value="P:protein complex oligomerization"/>
    <property type="evidence" value="ECO:0007669"/>
    <property type="project" value="InterPro"/>
</dbReference>
<dbReference type="GO" id="GO:1900079">
    <property type="term" value="P:regulation of arginine biosynthetic process"/>
    <property type="evidence" value="ECO:0007669"/>
    <property type="project" value="UniProtKB-UniRule"/>
</dbReference>
<dbReference type="Gene3D" id="3.30.1360.40">
    <property type="match status" value="1"/>
</dbReference>
<dbReference type="Gene3D" id="1.10.10.10">
    <property type="entry name" value="Winged helix-like DNA-binding domain superfamily/Winged helix DNA-binding domain"/>
    <property type="match status" value="1"/>
</dbReference>
<dbReference type="HAMAP" id="MF_00173">
    <property type="entry name" value="Arg_repressor"/>
    <property type="match status" value="1"/>
</dbReference>
<dbReference type="InterPro" id="IPR001669">
    <property type="entry name" value="Arg_repress"/>
</dbReference>
<dbReference type="InterPro" id="IPR020899">
    <property type="entry name" value="Arg_repress_C"/>
</dbReference>
<dbReference type="InterPro" id="IPR036251">
    <property type="entry name" value="Arg_repress_C_sf"/>
</dbReference>
<dbReference type="InterPro" id="IPR020900">
    <property type="entry name" value="Arg_repress_DNA-bd"/>
</dbReference>
<dbReference type="InterPro" id="IPR036388">
    <property type="entry name" value="WH-like_DNA-bd_sf"/>
</dbReference>
<dbReference type="InterPro" id="IPR036390">
    <property type="entry name" value="WH_DNA-bd_sf"/>
</dbReference>
<dbReference type="NCBIfam" id="TIGR01529">
    <property type="entry name" value="argR_whole"/>
    <property type="match status" value="1"/>
</dbReference>
<dbReference type="PANTHER" id="PTHR34471">
    <property type="entry name" value="ARGININE REPRESSOR"/>
    <property type="match status" value="1"/>
</dbReference>
<dbReference type="PANTHER" id="PTHR34471:SF1">
    <property type="entry name" value="ARGININE REPRESSOR"/>
    <property type="match status" value="1"/>
</dbReference>
<dbReference type="Pfam" id="PF01316">
    <property type="entry name" value="Arg_repressor"/>
    <property type="match status" value="1"/>
</dbReference>
<dbReference type="Pfam" id="PF02863">
    <property type="entry name" value="Arg_repressor_C"/>
    <property type="match status" value="1"/>
</dbReference>
<dbReference type="PRINTS" id="PR01467">
    <property type="entry name" value="ARGREPRESSOR"/>
</dbReference>
<dbReference type="SUPFAM" id="SSF55252">
    <property type="entry name" value="C-terminal domain of arginine repressor"/>
    <property type="match status" value="1"/>
</dbReference>
<dbReference type="SUPFAM" id="SSF46785">
    <property type="entry name" value="Winged helix' DNA-binding domain"/>
    <property type="match status" value="1"/>
</dbReference>
<protein>
    <recommendedName>
        <fullName evidence="1">Arginine repressor</fullName>
    </recommendedName>
</protein>
<sequence>MKSKRHLKILNIIKNEDISTQEELVERLHESGIDVTQATVSRDIKRLGLIKVPDGKGGYKYSLPNEKTYGDIISWLKKMFQDFVIDMDFSENIIVVQTMPGTAEGLGSAIDNAEIEGVIGTVAGDDTIMIVTKPIEKTPEIFNKLQDLLI</sequence>
<accession>B8D2I6</accession>
<proteinExistence type="inferred from homology"/>
<name>ARGR_HALOH</name>
<gene>
    <name evidence="1" type="primary">argR</name>
    <name type="ordered locus">Hore_06560</name>
</gene>
<evidence type="ECO:0000255" key="1">
    <source>
        <dbReference type="HAMAP-Rule" id="MF_00173"/>
    </source>
</evidence>
<organism>
    <name type="scientific">Halothermothrix orenii (strain H 168 / OCM 544 / DSM 9562)</name>
    <dbReference type="NCBI Taxonomy" id="373903"/>
    <lineage>
        <taxon>Bacteria</taxon>
        <taxon>Bacillati</taxon>
        <taxon>Bacillota</taxon>
        <taxon>Clostridia</taxon>
        <taxon>Halanaerobiales</taxon>
        <taxon>Halothermotrichaceae</taxon>
        <taxon>Halothermothrix</taxon>
    </lineage>
</organism>
<reference key="1">
    <citation type="journal article" date="2009" name="PLoS ONE">
        <title>Genome analysis of the anaerobic thermohalophilic bacterium Halothermothrix orenii.</title>
        <authorList>
            <person name="Mavromatis K."/>
            <person name="Ivanova N."/>
            <person name="Anderson I."/>
            <person name="Lykidis A."/>
            <person name="Hooper S.D."/>
            <person name="Sun H."/>
            <person name="Kunin V."/>
            <person name="Lapidus A."/>
            <person name="Hugenholtz P."/>
            <person name="Patel B."/>
            <person name="Kyrpides N.C."/>
        </authorList>
    </citation>
    <scope>NUCLEOTIDE SEQUENCE [LARGE SCALE GENOMIC DNA]</scope>
    <source>
        <strain>H 168 / OCM 544 / DSM 9562</strain>
    </source>
</reference>
<keyword id="KW-0028">Amino-acid biosynthesis</keyword>
<keyword id="KW-0055">Arginine biosynthesis</keyword>
<keyword id="KW-0963">Cytoplasm</keyword>
<keyword id="KW-0238">DNA-binding</keyword>
<keyword id="KW-1185">Reference proteome</keyword>
<keyword id="KW-0678">Repressor</keyword>
<keyword id="KW-0804">Transcription</keyword>
<keyword id="KW-0805">Transcription regulation</keyword>
<feature type="chain" id="PRO_1000123798" description="Arginine repressor">
    <location>
        <begin position="1"/>
        <end position="150"/>
    </location>
</feature>
<comment type="function">
    <text evidence="1">Regulates arginine biosynthesis genes.</text>
</comment>
<comment type="pathway">
    <text>Amino-acid biosynthesis; L-arginine biosynthesis [regulation].</text>
</comment>
<comment type="subcellular location">
    <subcellularLocation>
        <location evidence="1">Cytoplasm</location>
    </subcellularLocation>
</comment>
<comment type="similarity">
    <text evidence="1">Belongs to the ArgR family.</text>
</comment>